<feature type="chain" id="PRO_0000062720" description="Peptidoglycan glycosyltransferase MrdB">
    <location>
        <begin position="1"/>
        <end position="370"/>
    </location>
</feature>
<feature type="transmembrane region" description="Helical" evidence="1">
    <location>
        <begin position="20"/>
        <end position="40"/>
    </location>
</feature>
<feature type="transmembrane region" description="Helical" evidence="1">
    <location>
        <begin position="50"/>
        <end position="70"/>
    </location>
</feature>
<feature type="transmembrane region" description="Helical" evidence="1">
    <location>
        <begin position="75"/>
        <end position="95"/>
    </location>
</feature>
<feature type="transmembrane region" description="Helical" evidence="1">
    <location>
        <begin position="136"/>
        <end position="156"/>
    </location>
</feature>
<feature type="transmembrane region" description="Helical" evidence="1">
    <location>
        <begin position="160"/>
        <end position="180"/>
    </location>
</feature>
<feature type="transmembrane region" description="Helical" evidence="1">
    <location>
        <begin position="183"/>
        <end position="203"/>
    </location>
</feature>
<feature type="transmembrane region" description="Helical" evidence="1">
    <location>
        <begin position="263"/>
        <end position="283"/>
    </location>
</feature>
<feature type="transmembrane region" description="Helical" evidence="1">
    <location>
        <begin position="312"/>
        <end position="332"/>
    </location>
</feature>
<feature type="transmembrane region" description="Helical" evidence="1">
    <location>
        <begin position="336"/>
        <end position="356"/>
    </location>
</feature>
<protein>
    <recommendedName>
        <fullName evidence="1">Peptidoglycan glycosyltransferase MrdB</fullName>
        <shortName evidence="1">PGT</shortName>
        <ecNumber evidence="1">2.4.99.28</ecNumber>
    </recommendedName>
    <alternativeName>
        <fullName evidence="1">Cell elongation protein RodA</fullName>
    </alternativeName>
    <alternativeName>
        <fullName evidence="1">Cell wall polymerase</fullName>
    </alternativeName>
    <alternativeName>
        <fullName evidence="1">Peptidoglycan polymerase</fullName>
        <shortName evidence="1">PG polymerase</shortName>
    </alternativeName>
</protein>
<keyword id="KW-0997">Cell inner membrane</keyword>
<keyword id="KW-1003">Cell membrane</keyword>
<keyword id="KW-0133">Cell shape</keyword>
<keyword id="KW-0961">Cell wall biogenesis/degradation</keyword>
<keyword id="KW-0328">Glycosyltransferase</keyword>
<keyword id="KW-0472">Membrane</keyword>
<keyword id="KW-0573">Peptidoglycan synthesis</keyword>
<keyword id="KW-1185">Reference proteome</keyword>
<keyword id="KW-0808">Transferase</keyword>
<keyword id="KW-0812">Transmembrane</keyword>
<keyword id="KW-1133">Transmembrane helix</keyword>
<comment type="function">
    <text evidence="1">Peptidoglycan polymerase that is essential for cell wall elongation.</text>
</comment>
<comment type="catalytic activity">
    <reaction evidence="1">
        <text>[GlcNAc-(1-&gt;4)-Mur2Ac(oyl-L-Ala-gamma-D-Glu-L-Lys-D-Ala-D-Ala)](n)-di-trans,octa-cis-undecaprenyl diphosphate + beta-D-GlcNAc-(1-&gt;4)-Mur2Ac(oyl-L-Ala-gamma-D-Glu-L-Lys-D-Ala-D-Ala)-di-trans,octa-cis-undecaprenyl diphosphate = [GlcNAc-(1-&gt;4)-Mur2Ac(oyl-L-Ala-gamma-D-Glu-L-Lys-D-Ala-D-Ala)](n+1)-di-trans,octa-cis-undecaprenyl diphosphate + di-trans,octa-cis-undecaprenyl diphosphate + H(+)</text>
        <dbReference type="Rhea" id="RHEA:23708"/>
        <dbReference type="Rhea" id="RHEA-COMP:9602"/>
        <dbReference type="Rhea" id="RHEA-COMP:9603"/>
        <dbReference type="ChEBI" id="CHEBI:15378"/>
        <dbReference type="ChEBI" id="CHEBI:58405"/>
        <dbReference type="ChEBI" id="CHEBI:60033"/>
        <dbReference type="ChEBI" id="CHEBI:78435"/>
        <dbReference type="EC" id="2.4.99.28"/>
    </reaction>
</comment>
<comment type="pathway">
    <text evidence="1">Cell wall biogenesis; peptidoglycan biosynthesis.</text>
</comment>
<comment type="subcellular location">
    <subcellularLocation>
        <location evidence="1">Cell inner membrane</location>
        <topology evidence="1">Multi-pass membrane protein</topology>
    </subcellularLocation>
</comment>
<comment type="similarity">
    <text evidence="1">Belongs to the SEDS family. MrdB/RodA subfamily.</text>
</comment>
<reference key="1">
    <citation type="journal article" date="2002" name="Nucleic Acids Res.">
        <title>Genome sequence of Shigella flexneri 2a: insights into pathogenicity through comparison with genomes of Escherichia coli K12 and O157.</title>
        <authorList>
            <person name="Jin Q."/>
            <person name="Yuan Z."/>
            <person name="Xu J."/>
            <person name="Wang Y."/>
            <person name="Shen Y."/>
            <person name="Lu W."/>
            <person name="Wang J."/>
            <person name="Liu H."/>
            <person name="Yang J."/>
            <person name="Yang F."/>
            <person name="Zhang X."/>
            <person name="Zhang J."/>
            <person name="Yang G."/>
            <person name="Wu H."/>
            <person name="Qu D."/>
            <person name="Dong J."/>
            <person name="Sun L."/>
            <person name="Xue Y."/>
            <person name="Zhao A."/>
            <person name="Gao Y."/>
            <person name="Zhu J."/>
            <person name="Kan B."/>
            <person name="Ding K."/>
            <person name="Chen S."/>
            <person name="Cheng H."/>
            <person name="Yao Z."/>
            <person name="He B."/>
            <person name="Chen R."/>
            <person name="Ma D."/>
            <person name="Qiang B."/>
            <person name="Wen Y."/>
            <person name="Hou Y."/>
            <person name="Yu J."/>
        </authorList>
    </citation>
    <scope>NUCLEOTIDE SEQUENCE [LARGE SCALE GENOMIC DNA]</scope>
    <source>
        <strain>301 / Serotype 2a</strain>
    </source>
</reference>
<reference key="2">
    <citation type="journal article" date="2003" name="Infect. Immun.">
        <title>Complete genome sequence and comparative genomics of Shigella flexneri serotype 2a strain 2457T.</title>
        <authorList>
            <person name="Wei J."/>
            <person name="Goldberg M.B."/>
            <person name="Burland V."/>
            <person name="Venkatesan M.M."/>
            <person name="Deng W."/>
            <person name="Fournier G."/>
            <person name="Mayhew G.F."/>
            <person name="Plunkett G. III"/>
            <person name="Rose D.J."/>
            <person name="Darling A."/>
            <person name="Mau B."/>
            <person name="Perna N.T."/>
            <person name="Payne S.M."/>
            <person name="Runyen-Janecky L.J."/>
            <person name="Zhou S."/>
            <person name="Schwartz D.C."/>
            <person name="Blattner F.R."/>
        </authorList>
    </citation>
    <scope>NUCLEOTIDE SEQUENCE [LARGE SCALE GENOMIC DNA]</scope>
    <source>
        <strain>ATCC 700930 / 2457T / Serotype 2a</strain>
    </source>
</reference>
<evidence type="ECO:0000255" key="1">
    <source>
        <dbReference type="HAMAP-Rule" id="MF_02079"/>
    </source>
</evidence>
<sequence length="370" mass="40476">MTDNPNKKTFWDKVHLDPTMLLILLALLVYSALVIWSASGQDIGMMERKIGQIAMGLVIMVVMAQIPPRVYEGWAPYLYIICIILLVAVDAFGAISKGAQRWLDLGIVRFQPSEIAKIAVPLMVARFINRDVCPPSLKNTGIALVLIFMPTLLVAAQPDLGTSILVALSGLFVLFLSGLSWRLIGVAVVLVAAFIPILWFFLMHDYQRQRVMMLLDPESDPLGAGYHIIQSKIAIGSGGLRGKGWLHGTQSQLEFLPERHTDFIFAVLAEELGLVGILILLALYILLIMRGLWIAARAQTTFGRVMAGGLMLILFVYVFVNIGMVSGILPVVGVPLPLVSYGGSALIVLMAGFGIVMSIHTHRKMLSKSV</sequence>
<gene>
    <name evidence="1" type="primary">mrdB</name>
    <name type="synonym">rodA</name>
    <name type="ordered locus">SF0647</name>
    <name type="ordered locus">S0669</name>
</gene>
<dbReference type="EC" id="2.4.99.28" evidence="1"/>
<dbReference type="EMBL" id="AE005674">
    <property type="protein sequence ID" value="AAN42283.1"/>
    <property type="molecule type" value="Genomic_DNA"/>
</dbReference>
<dbReference type="EMBL" id="AE014073">
    <property type="protein sequence ID" value="AAP16154.1"/>
    <property type="molecule type" value="Genomic_DNA"/>
</dbReference>
<dbReference type="RefSeq" id="NP_706576.1">
    <property type="nucleotide sequence ID" value="NC_004337.2"/>
</dbReference>
<dbReference type="RefSeq" id="WP_000131719.1">
    <property type="nucleotide sequence ID" value="NZ_WPGW01000002.1"/>
</dbReference>
<dbReference type="SMR" id="P0ABG9"/>
<dbReference type="STRING" id="198214.SF0647"/>
<dbReference type="PaxDb" id="198214-SF0647"/>
<dbReference type="GeneID" id="1023601"/>
<dbReference type="GeneID" id="93776848"/>
<dbReference type="KEGG" id="sfl:SF0647"/>
<dbReference type="KEGG" id="sfx:S0669"/>
<dbReference type="PATRIC" id="fig|198214.7.peg.754"/>
<dbReference type="HOGENOM" id="CLU_029243_2_2_6"/>
<dbReference type="UniPathway" id="UPA00219"/>
<dbReference type="Proteomes" id="UP000001006">
    <property type="component" value="Chromosome"/>
</dbReference>
<dbReference type="Proteomes" id="UP000002673">
    <property type="component" value="Chromosome"/>
</dbReference>
<dbReference type="GO" id="GO:0032153">
    <property type="term" value="C:cell division site"/>
    <property type="evidence" value="ECO:0007669"/>
    <property type="project" value="TreeGrafter"/>
</dbReference>
<dbReference type="GO" id="GO:0005886">
    <property type="term" value="C:plasma membrane"/>
    <property type="evidence" value="ECO:0007669"/>
    <property type="project" value="UniProtKB-SubCell"/>
</dbReference>
<dbReference type="GO" id="GO:0015648">
    <property type="term" value="F:lipid-linked peptidoglycan transporter activity"/>
    <property type="evidence" value="ECO:0007669"/>
    <property type="project" value="TreeGrafter"/>
</dbReference>
<dbReference type="GO" id="GO:0008955">
    <property type="term" value="F:peptidoglycan glycosyltransferase activity"/>
    <property type="evidence" value="ECO:0007669"/>
    <property type="project" value="UniProtKB-UniRule"/>
</dbReference>
<dbReference type="GO" id="GO:0051301">
    <property type="term" value="P:cell division"/>
    <property type="evidence" value="ECO:0007669"/>
    <property type="project" value="InterPro"/>
</dbReference>
<dbReference type="GO" id="GO:0071555">
    <property type="term" value="P:cell wall organization"/>
    <property type="evidence" value="ECO:0007669"/>
    <property type="project" value="UniProtKB-KW"/>
</dbReference>
<dbReference type="GO" id="GO:0009252">
    <property type="term" value="P:peptidoglycan biosynthetic process"/>
    <property type="evidence" value="ECO:0007669"/>
    <property type="project" value="UniProtKB-UniRule"/>
</dbReference>
<dbReference type="GO" id="GO:0008360">
    <property type="term" value="P:regulation of cell shape"/>
    <property type="evidence" value="ECO:0007669"/>
    <property type="project" value="UniProtKB-KW"/>
</dbReference>
<dbReference type="HAMAP" id="MF_02079">
    <property type="entry name" value="PGT_RodA"/>
    <property type="match status" value="1"/>
</dbReference>
<dbReference type="InterPro" id="IPR018365">
    <property type="entry name" value="Cell_cycle_FtsW-rel_CS"/>
</dbReference>
<dbReference type="InterPro" id="IPR001182">
    <property type="entry name" value="FtsW/RodA"/>
</dbReference>
<dbReference type="InterPro" id="IPR011923">
    <property type="entry name" value="RodA/MrdB"/>
</dbReference>
<dbReference type="NCBIfam" id="NF008060">
    <property type="entry name" value="PRK10794.1"/>
    <property type="match status" value="1"/>
</dbReference>
<dbReference type="NCBIfam" id="TIGR02210">
    <property type="entry name" value="rodA_shape"/>
    <property type="match status" value="1"/>
</dbReference>
<dbReference type="PANTHER" id="PTHR30474">
    <property type="entry name" value="CELL CYCLE PROTEIN"/>
    <property type="match status" value="1"/>
</dbReference>
<dbReference type="PANTHER" id="PTHR30474:SF1">
    <property type="entry name" value="PEPTIDOGLYCAN GLYCOSYLTRANSFERASE MRDB"/>
    <property type="match status" value="1"/>
</dbReference>
<dbReference type="Pfam" id="PF01098">
    <property type="entry name" value="FTSW_RODA_SPOVE"/>
    <property type="match status" value="1"/>
</dbReference>
<dbReference type="PROSITE" id="PS00428">
    <property type="entry name" value="FTSW_RODA_SPOVE"/>
    <property type="match status" value="1"/>
</dbReference>
<accession>P0ABG9</accession>
<accession>P13409</accession>
<accession>P15035</accession>
<name>RODA_SHIFL</name>
<proteinExistence type="inferred from homology"/>
<organism>
    <name type="scientific">Shigella flexneri</name>
    <dbReference type="NCBI Taxonomy" id="623"/>
    <lineage>
        <taxon>Bacteria</taxon>
        <taxon>Pseudomonadati</taxon>
        <taxon>Pseudomonadota</taxon>
        <taxon>Gammaproteobacteria</taxon>
        <taxon>Enterobacterales</taxon>
        <taxon>Enterobacteriaceae</taxon>
        <taxon>Shigella</taxon>
    </lineage>
</organism>